<sequence length="374" mass="39993">MRYLITGGGTGGHIYPALSIARALTEQDPEAELLYVGTRTGREAAIVPQAGIAFAVISSGGVVNLGLLQRVRGGLRAARGLLEALGHIRRFRPDIVIGTGGFVAGPVLAAARLARVPLVIQEQNAFPGVTNRLAARWATAVFVPYEEARAHFPPGVRLIRAGNPVRPEIASASREAGRQALGLSERDRVLVIMGGSGGARDFNRVAAEAVLQLDVPGLRVVHITGERYFGQVKAQYGDRAPHVTLLPYAHNMPEVYAAADAGLFRAGALTLAEIQVRRLPSVLIPSPNVTHNHQEWNARTLERRGAAIVLREGGLTPADLAAALTRLLTDEALADRMRAALGEVADPDAARTIARRIVGIARQSREAREARRGR</sequence>
<keyword id="KW-0131">Cell cycle</keyword>
<keyword id="KW-0132">Cell division</keyword>
<keyword id="KW-1003">Cell membrane</keyword>
<keyword id="KW-0133">Cell shape</keyword>
<keyword id="KW-0961">Cell wall biogenesis/degradation</keyword>
<keyword id="KW-0328">Glycosyltransferase</keyword>
<keyword id="KW-0472">Membrane</keyword>
<keyword id="KW-0573">Peptidoglycan synthesis</keyword>
<keyword id="KW-1185">Reference proteome</keyword>
<keyword id="KW-0808">Transferase</keyword>
<feature type="chain" id="PRO_0000225105" description="UDP-N-acetylglucosamine--N-acetylmuramyl-(pentapeptide) pyrophosphoryl-undecaprenol N-acetylglucosamine transferase">
    <location>
        <begin position="1"/>
        <end position="374"/>
    </location>
</feature>
<feature type="binding site" evidence="1">
    <location>
        <begin position="10"/>
        <end position="12"/>
    </location>
    <ligand>
        <name>UDP-N-acetyl-alpha-D-glucosamine</name>
        <dbReference type="ChEBI" id="CHEBI:57705"/>
    </ligand>
</feature>
<feature type="binding site" evidence="1">
    <location>
        <position position="124"/>
    </location>
    <ligand>
        <name>UDP-N-acetyl-alpha-D-glucosamine</name>
        <dbReference type="ChEBI" id="CHEBI:57705"/>
    </ligand>
</feature>
<feature type="binding site" evidence="1">
    <location>
        <position position="166"/>
    </location>
    <ligand>
        <name>UDP-N-acetyl-alpha-D-glucosamine</name>
        <dbReference type="ChEBI" id="CHEBI:57705"/>
    </ligand>
</feature>
<feature type="binding site" evidence="1">
    <location>
        <position position="196"/>
    </location>
    <ligand>
        <name>UDP-N-acetyl-alpha-D-glucosamine</name>
        <dbReference type="ChEBI" id="CHEBI:57705"/>
    </ligand>
</feature>
<feature type="binding site" evidence="1">
    <location>
        <position position="294"/>
    </location>
    <ligand>
        <name>UDP-N-acetyl-alpha-D-glucosamine</name>
        <dbReference type="ChEBI" id="CHEBI:57705"/>
    </ligand>
</feature>
<comment type="function">
    <text evidence="1">Cell wall formation. Catalyzes the transfer of a GlcNAc subunit on undecaprenyl-pyrophosphoryl-MurNAc-pentapeptide (lipid intermediate I) to form undecaprenyl-pyrophosphoryl-MurNAc-(pentapeptide)GlcNAc (lipid intermediate II).</text>
</comment>
<comment type="catalytic activity">
    <reaction evidence="1">
        <text>di-trans,octa-cis-undecaprenyl diphospho-N-acetyl-alpha-D-muramoyl-L-alanyl-D-glutamyl-meso-2,6-diaminopimeloyl-D-alanyl-D-alanine + UDP-N-acetyl-alpha-D-glucosamine = di-trans,octa-cis-undecaprenyl diphospho-[N-acetyl-alpha-D-glucosaminyl-(1-&gt;4)]-N-acetyl-alpha-D-muramoyl-L-alanyl-D-glutamyl-meso-2,6-diaminopimeloyl-D-alanyl-D-alanine + UDP + H(+)</text>
        <dbReference type="Rhea" id="RHEA:31227"/>
        <dbReference type="ChEBI" id="CHEBI:15378"/>
        <dbReference type="ChEBI" id="CHEBI:57705"/>
        <dbReference type="ChEBI" id="CHEBI:58223"/>
        <dbReference type="ChEBI" id="CHEBI:61387"/>
        <dbReference type="ChEBI" id="CHEBI:61388"/>
        <dbReference type="EC" id="2.4.1.227"/>
    </reaction>
</comment>
<comment type="pathway">
    <text evidence="1">Cell wall biogenesis; peptidoglycan biosynthesis.</text>
</comment>
<comment type="subcellular location">
    <subcellularLocation>
        <location evidence="1">Cell membrane</location>
        <topology evidence="1">Peripheral membrane protein</topology>
        <orientation evidence="1">Cytoplasmic side</orientation>
    </subcellularLocation>
</comment>
<comment type="similarity">
    <text evidence="1">Belongs to the glycosyltransferase 28 family. MurG subfamily.</text>
</comment>
<organism>
    <name type="scientific">Symbiobacterium thermophilum (strain DSM 24528 / JCM 14929 / IAM 14863 / T)</name>
    <dbReference type="NCBI Taxonomy" id="292459"/>
    <lineage>
        <taxon>Bacteria</taxon>
        <taxon>Bacillati</taxon>
        <taxon>Bacillota</taxon>
        <taxon>Clostridia</taxon>
        <taxon>Eubacteriales</taxon>
        <taxon>Symbiobacteriaceae</taxon>
        <taxon>Symbiobacterium</taxon>
    </lineage>
</organism>
<proteinExistence type="inferred from homology"/>
<gene>
    <name evidence="1" type="primary">murG</name>
    <name type="ordered locus">STH1210</name>
</gene>
<protein>
    <recommendedName>
        <fullName evidence="1">UDP-N-acetylglucosamine--N-acetylmuramyl-(pentapeptide) pyrophosphoryl-undecaprenol N-acetylglucosamine transferase</fullName>
        <ecNumber evidence="1">2.4.1.227</ecNumber>
    </recommendedName>
    <alternativeName>
        <fullName evidence="1">Undecaprenyl-PP-MurNAc-pentapeptide-UDPGlcNAc GlcNAc transferase</fullName>
    </alternativeName>
</protein>
<evidence type="ECO:0000255" key="1">
    <source>
        <dbReference type="HAMAP-Rule" id="MF_00033"/>
    </source>
</evidence>
<name>MURG_SYMTH</name>
<dbReference type="EC" id="2.4.1.227" evidence="1"/>
<dbReference type="EMBL" id="AP006840">
    <property type="protein sequence ID" value="BAD40195.1"/>
    <property type="molecule type" value="Genomic_DNA"/>
</dbReference>
<dbReference type="RefSeq" id="WP_011195341.1">
    <property type="nucleotide sequence ID" value="NC_006177.1"/>
</dbReference>
<dbReference type="SMR" id="Q67Q48"/>
<dbReference type="STRING" id="292459.STH1210"/>
<dbReference type="CAZy" id="GT28">
    <property type="family name" value="Glycosyltransferase Family 28"/>
</dbReference>
<dbReference type="KEGG" id="sth:STH1210"/>
<dbReference type="eggNOG" id="COG0707">
    <property type="taxonomic scope" value="Bacteria"/>
</dbReference>
<dbReference type="HOGENOM" id="CLU_037404_0_1_9"/>
<dbReference type="OrthoDB" id="9808936at2"/>
<dbReference type="UniPathway" id="UPA00219"/>
<dbReference type="Proteomes" id="UP000000417">
    <property type="component" value="Chromosome"/>
</dbReference>
<dbReference type="GO" id="GO:0005886">
    <property type="term" value="C:plasma membrane"/>
    <property type="evidence" value="ECO:0007669"/>
    <property type="project" value="UniProtKB-SubCell"/>
</dbReference>
<dbReference type="GO" id="GO:0051991">
    <property type="term" value="F:UDP-N-acetyl-D-glucosamine:N-acetylmuramoyl-L-alanyl-D-glutamyl-meso-2,6-diaminopimelyl-D-alanyl-D-alanine-diphosphoundecaprenol 4-beta-N-acetylglucosaminlytransferase activity"/>
    <property type="evidence" value="ECO:0007669"/>
    <property type="project" value="RHEA"/>
</dbReference>
<dbReference type="GO" id="GO:0050511">
    <property type="term" value="F:undecaprenyldiphospho-muramoylpentapeptide beta-N-acetylglucosaminyltransferase activity"/>
    <property type="evidence" value="ECO:0007669"/>
    <property type="project" value="UniProtKB-UniRule"/>
</dbReference>
<dbReference type="GO" id="GO:0005975">
    <property type="term" value="P:carbohydrate metabolic process"/>
    <property type="evidence" value="ECO:0007669"/>
    <property type="project" value="InterPro"/>
</dbReference>
<dbReference type="GO" id="GO:0051301">
    <property type="term" value="P:cell division"/>
    <property type="evidence" value="ECO:0007669"/>
    <property type="project" value="UniProtKB-KW"/>
</dbReference>
<dbReference type="GO" id="GO:0071555">
    <property type="term" value="P:cell wall organization"/>
    <property type="evidence" value="ECO:0007669"/>
    <property type="project" value="UniProtKB-KW"/>
</dbReference>
<dbReference type="GO" id="GO:0030259">
    <property type="term" value="P:lipid glycosylation"/>
    <property type="evidence" value="ECO:0007669"/>
    <property type="project" value="UniProtKB-UniRule"/>
</dbReference>
<dbReference type="GO" id="GO:0009252">
    <property type="term" value="P:peptidoglycan biosynthetic process"/>
    <property type="evidence" value="ECO:0007669"/>
    <property type="project" value="UniProtKB-UniRule"/>
</dbReference>
<dbReference type="GO" id="GO:0008360">
    <property type="term" value="P:regulation of cell shape"/>
    <property type="evidence" value="ECO:0007669"/>
    <property type="project" value="UniProtKB-KW"/>
</dbReference>
<dbReference type="CDD" id="cd03785">
    <property type="entry name" value="GT28_MurG"/>
    <property type="match status" value="1"/>
</dbReference>
<dbReference type="Gene3D" id="3.40.50.2000">
    <property type="entry name" value="Glycogen Phosphorylase B"/>
    <property type="match status" value="2"/>
</dbReference>
<dbReference type="HAMAP" id="MF_00033">
    <property type="entry name" value="MurG"/>
    <property type="match status" value="1"/>
</dbReference>
<dbReference type="InterPro" id="IPR006009">
    <property type="entry name" value="GlcNAc_MurG"/>
</dbReference>
<dbReference type="InterPro" id="IPR007235">
    <property type="entry name" value="Glyco_trans_28_C"/>
</dbReference>
<dbReference type="InterPro" id="IPR004276">
    <property type="entry name" value="GlycoTrans_28_N"/>
</dbReference>
<dbReference type="NCBIfam" id="TIGR01133">
    <property type="entry name" value="murG"/>
    <property type="match status" value="1"/>
</dbReference>
<dbReference type="PANTHER" id="PTHR21015:SF22">
    <property type="entry name" value="GLYCOSYLTRANSFERASE"/>
    <property type="match status" value="1"/>
</dbReference>
<dbReference type="PANTHER" id="PTHR21015">
    <property type="entry name" value="UDP-N-ACETYLGLUCOSAMINE--N-ACETYLMURAMYL-(PENTAPEPTIDE) PYROPHOSPHORYL-UNDECAPRENOL N-ACETYLGLUCOSAMINE TRANSFERASE 1"/>
    <property type="match status" value="1"/>
</dbReference>
<dbReference type="Pfam" id="PF04101">
    <property type="entry name" value="Glyco_tran_28_C"/>
    <property type="match status" value="1"/>
</dbReference>
<dbReference type="Pfam" id="PF03033">
    <property type="entry name" value="Glyco_transf_28"/>
    <property type="match status" value="1"/>
</dbReference>
<dbReference type="SUPFAM" id="SSF53756">
    <property type="entry name" value="UDP-Glycosyltransferase/glycogen phosphorylase"/>
    <property type="match status" value="1"/>
</dbReference>
<reference key="1">
    <citation type="journal article" date="2004" name="Nucleic Acids Res.">
        <title>Genome sequence of Symbiobacterium thermophilum, an uncultivable bacterium that depends on microbial commensalism.</title>
        <authorList>
            <person name="Ueda K."/>
            <person name="Yamashita A."/>
            <person name="Ishikawa J."/>
            <person name="Shimada M."/>
            <person name="Watsuji T."/>
            <person name="Morimura K."/>
            <person name="Ikeda H."/>
            <person name="Hattori M."/>
            <person name="Beppu T."/>
        </authorList>
    </citation>
    <scope>NUCLEOTIDE SEQUENCE [LARGE SCALE GENOMIC DNA]</scope>
    <source>
        <strain>DSM 24528 / JCM 14929 / IAM 14863 / T</strain>
    </source>
</reference>
<accession>Q67Q48</accession>